<accession>Q9TM18</accession>
<proteinExistence type="inferred from homology"/>
<dbReference type="EMBL" id="AF022186">
    <property type="protein sequence ID" value="AAF12997.1"/>
    <property type="molecule type" value="Genomic_DNA"/>
</dbReference>
<dbReference type="RefSeq" id="NP_045049.1">
    <property type="nucleotide sequence ID" value="NC_001840.1"/>
</dbReference>
<dbReference type="GeneID" id="800152"/>
<dbReference type="GO" id="GO:0031969">
    <property type="term" value="C:chloroplast membrane"/>
    <property type="evidence" value="ECO:0007669"/>
    <property type="project" value="UniProtKB-SubCell"/>
</dbReference>
<dbReference type="InterPro" id="IPR019634">
    <property type="entry name" value="Uncharacterised_Ycf49"/>
</dbReference>
<dbReference type="PANTHER" id="PTHR33833">
    <property type="entry name" value="NUCLEOLAR-LIKE PROTEIN-RELATED"/>
    <property type="match status" value="1"/>
</dbReference>
<dbReference type="PANTHER" id="PTHR33833:SF3">
    <property type="entry name" value="YCF49-LIKE PROTEIN"/>
    <property type="match status" value="1"/>
</dbReference>
<dbReference type="Pfam" id="PF10693">
    <property type="entry name" value="DUF2499"/>
    <property type="match status" value="1"/>
</dbReference>
<gene>
    <name type="primary">ycf49</name>
    <name type="synonym">ycf55</name>
</gene>
<organism>
    <name type="scientific">Cyanidium caldarium</name>
    <name type="common">Red alga</name>
    <dbReference type="NCBI Taxonomy" id="2771"/>
    <lineage>
        <taxon>Eukaryota</taxon>
        <taxon>Rhodophyta</taxon>
        <taxon>Bangiophyceae</taxon>
        <taxon>Cyanidiales</taxon>
        <taxon>Cyanidiaceae</taxon>
        <taxon>Cyanidium</taxon>
    </lineage>
</organism>
<comment type="subcellular location">
    <subcellularLocation>
        <location evidence="2">Plastid</location>
        <location evidence="2">Chloroplast membrane</location>
        <topology evidence="2">Multi-pass membrane protein</topology>
    </subcellularLocation>
</comment>
<comment type="similarity">
    <text evidence="2">Belongs to the ycf49 family.</text>
</comment>
<reference key="1">
    <citation type="journal article" date="2000" name="J. Mol. Evol.">
        <title>The structure and gene repertoire of an ancient red algal plastid genome.</title>
        <authorList>
            <person name="Gloeckner G."/>
            <person name="Rosenthal A."/>
            <person name="Valentin K.-U."/>
        </authorList>
    </citation>
    <scope>NUCLEOTIDE SEQUENCE [LARGE SCALE GENOMIC DNA]</scope>
    <source>
        <strain>RK-1</strain>
    </source>
</reference>
<feature type="chain" id="PRO_0000217375" description="Uncharacterized protein ycf49">
    <location>
        <begin position="1"/>
        <end position="97"/>
    </location>
</feature>
<feature type="transmembrane region" description="Helical" evidence="1">
    <location>
        <begin position="13"/>
        <end position="33"/>
    </location>
</feature>
<feature type="transmembrane region" description="Helical" evidence="1">
    <location>
        <begin position="43"/>
        <end position="63"/>
    </location>
</feature>
<feature type="transmembrane region" description="Helical" evidence="1">
    <location>
        <begin position="71"/>
        <end position="91"/>
    </location>
</feature>
<protein>
    <recommendedName>
        <fullName>Uncharacterized protein ycf49</fullName>
    </recommendedName>
</protein>
<name>YCF49_CYACA</name>
<sequence>MYSLSLPTWNIHIVTLVEWSIVIRLIYLFTYFYDIPRSFNFLIIILMIFFFLSGLFACCWHFFNNNSILLWISVAQAALTAFSNFFFLLFISAYYHK</sequence>
<evidence type="ECO:0000255" key="1"/>
<evidence type="ECO:0000305" key="2"/>
<keyword id="KW-0150">Chloroplast</keyword>
<keyword id="KW-0472">Membrane</keyword>
<keyword id="KW-0934">Plastid</keyword>
<keyword id="KW-0812">Transmembrane</keyword>
<keyword id="KW-1133">Transmembrane helix</keyword>
<geneLocation type="chloroplast"/>